<sequence length="70" mass="8338">MTKIVLKPGEPVEVAMRRFRRAILQTGLIVELKSRTAYEKPTTERKRKKKAAEARLRKRLRMQMLPKKLY</sequence>
<reference key="1">
    <citation type="journal article" date="2010" name="PLoS ONE">
        <title>The complete genome sequence of Cupriavidus metallidurans strain CH34, a master survivalist in harsh and anthropogenic environments.</title>
        <authorList>
            <person name="Janssen P.J."/>
            <person name="Van Houdt R."/>
            <person name="Moors H."/>
            <person name="Monsieurs P."/>
            <person name="Morin N."/>
            <person name="Michaux A."/>
            <person name="Benotmane M.A."/>
            <person name="Leys N."/>
            <person name="Vallaeys T."/>
            <person name="Lapidus A."/>
            <person name="Monchy S."/>
            <person name="Medigue C."/>
            <person name="Taghavi S."/>
            <person name="McCorkle S."/>
            <person name="Dunn J."/>
            <person name="van der Lelie D."/>
            <person name="Mergeay M."/>
        </authorList>
    </citation>
    <scope>NUCLEOTIDE SEQUENCE [LARGE SCALE GENOMIC DNA]</scope>
    <source>
        <strain>ATCC 43123 / DSM 2839 / NBRC 102507 / CH34</strain>
    </source>
</reference>
<organism>
    <name type="scientific">Cupriavidus metallidurans (strain ATCC 43123 / DSM 2839 / NBRC 102507 / CH34)</name>
    <name type="common">Ralstonia metallidurans</name>
    <dbReference type="NCBI Taxonomy" id="266264"/>
    <lineage>
        <taxon>Bacteria</taxon>
        <taxon>Pseudomonadati</taxon>
        <taxon>Pseudomonadota</taxon>
        <taxon>Betaproteobacteria</taxon>
        <taxon>Burkholderiales</taxon>
        <taxon>Burkholderiaceae</taxon>
        <taxon>Cupriavidus</taxon>
    </lineage>
</organism>
<feature type="chain" id="PRO_0000266742" description="Small ribosomal subunit protein bS21A">
    <location>
        <begin position="1"/>
        <end position="70"/>
    </location>
</feature>
<comment type="similarity">
    <text evidence="1">Belongs to the bacterial ribosomal protein bS21 family.</text>
</comment>
<protein>
    <recommendedName>
        <fullName evidence="1">Small ribosomal subunit protein bS21A</fullName>
    </recommendedName>
    <alternativeName>
        <fullName evidence="2">30S ribosomal protein S21 1</fullName>
    </alternativeName>
</protein>
<evidence type="ECO:0000255" key="1">
    <source>
        <dbReference type="HAMAP-Rule" id="MF_00358"/>
    </source>
</evidence>
<evidence type="ECO:0000305" key="2"/>
<gene>
    <name evidence="1" type="primary">rpsU1</name>
    <name type="ordered locus">Rmet_2455</name>
</gene>
<keyword id="KW-1185">Reference proteome</keyword>
<keyword id="KW-0687">Ribonucleoprotein</keyword>
<keyword id="KW-0689">Ribosomal protein</keyword>
<dbReference type="EMBL" id="CP000352">
    <property type="protein sequence ID" value="ABF09332.1"/>
    <property type="molecule type" value="Genomic_DNA"/>
</dbReference>
<dbReference type="SMR" id="Q1LKJ4"/>
<dbReference type="STRING" id="266264.Rmet_2455"/>
<dbReference type="KEGG" id="rme:Rmet_2455"/>
<dbReference type="eggNOG" id="COG0828">
    <property type="taxonomic scope" value="Bacteria"/>
</dbReference>
<dbReference type="HOGENOM" id="CLU_159258_1_1_4"/>
<dbReference type="Proteomes" id="UP000002429">
    <property type="component" value="Chromosome"/>
</dbReference>
<dbReference type="GO" id="GO:1990904">
    <property type="term" value="C:ribonucleoprotein complex"/>
    <property type="evidence" value="ECO:0007669"/>
    <property type="project" value="UniProtKB-KW"/>
</dbReference>
<dbReference type="GO" id="GO:0005840">
    <property type="term" value="C:ribosome"/>
    <property type="evidence" value="ECO:0007669"/>
    <property type="project" value="UniProtKB-KW"/>
</dbReference>
<dbReference type="GO" id="GO:0003735">
    <property type="term" value="F:structural constituent of ribosome"/>
    <property type="evidence" value="ECO:0007669"/>
    <property type="project" value="InterPro"/>
</dbReference>
<dbReference type="GO" id="GO:0006412">
    <property type="term" value="P:translation"/>
    <property type="evidence" value="ECO:0007669"/>
    <property type="project" value="UniProtKB-UniRule"/>
</dbReference>
<dbReference type="Gene3D" id="1.20.5.1150">
    <property type="entry name" value="Ribosomal protein S8"/>
    <property type="match status" value="1"/>
</dbReference>
<dbReference type="HAMAP" id="MF_00358">
    <property type="entry name" value="Ribosomal_bS21"/>
    <property type="match status" value="1"/>
</dbReference>
<dbReference type="InterPro" id="IPR001911">
    <property type="entry name" value="Ribosomal_bS21"/>
</dbReference>
<dbReference type="InterPro" id="IPR038380">
    <property type="entry name" value="Ribosomal_bS21_sf"/>
</dbReference>
<dbReference type="NCBIfam" id="TIGR00030">
    <property type="entry name" value="S21p"/>
    <property type="match status" value="1"/>
</dbReference>
<dbReference type="PANTHER" id="PTHR21109">
    <property type="entry name" value="MITOCHONDRIAL 28S RIBOSOMAL PROTEIN S21"/>
    <property type="match status" value="1"/>
</dbReference>
<dbReference type="PANTHER" id="PTHR21109:SF22">
    <property type="entry name" value="SMALL RIBOSOMAL SUBUNIT PROTEIN BS21"/>
    <property type="match status" value="1"/>
</dbReference>
<dbReference type="Pfam" id="PF01165">
    <property type="entry name" value="Ribosomal_S21"/>
    <property type="match status" value="1"/>
</dbReference>
<dbReference type="PRINTS" id="PR00976">
    <property type="entry name" value="RIBOSOMALS21"/>
</dbReference>
<accession>Q1LKJ4</accession>
<proteinExistence type="inferred from homology"/>
<name>RS211_CUPMC</name>